<accession>Q83F59</accession>
<proteinExistence type="evidence at protein level"/>
<keyword id="KW-0131">Cell cycle</keyword>
<keyword id="KW-0132">Cell division</keyword>
<keyword id="KW-0574">Periplasm</keyword>
<keyword id="KW-1185">Reference proteome</keyword>
<keyword id="KW-0732">Signal</keyword>
<sequence>MQKRHPIIYLLITLLIFVPVSYGALDLELTKGVTAAIPIAIMPFAGPSVLAPGDETIPQVIKNDLQNSGQFRVTGSGNLDQTAASLEQIDYSYWRKQKVNALVVGAINPLGMRRYRVAFTLINVFDSNNRLLSESFNVNAKELRNLAHHISDLIYQKLTGVRGVFSTKIAYVLVQASSENTAAKYTLEVADADGFNPQPLLVSDMPIMSPTWSPDGNKIAYVSFEGHRAAIYLQDLATGRRQRLSEAPGINGAPAFSPDGKQLALVLTKTGNPKIYILNLADGHLREITKGWSIDTEPAWSPDGKSLLFTSNRDGTPQIYNYSFADGSINRVTYRGDYNARPSFMPDGKSIIMMHRENGLFGIARQDLSTGQVQILSESGTDESPSLAPNGKMAIYAMEYGGRGVLAQVSIDGQIKLRLPARNGNVQEPAWSPYLGV</sequence>
<evidence type="ECO:0000255" key="1">
    <source>
        <dbReference type="HAMAP-Rule" id="MF_00671"/>
    </source>
</evidence>
<evidence type="ECO:0000269" key="2">
    <source>
    </source>
</evidence>
<evidence type="ECO:0000305" key="3"/>
<reference key="1">
    <citation type="journal article" date="2003" name="Proc. Natl. Acad. Sci. U.S.A.">
        <title>Complete genome sequence of the Q-fever pathogen, Coxiella burnetii.</title>
        <authorList>
            <person name="Seshadri R."/>
            <person name="Paulsen I.T."/>
            <person name="Eisen J.A."/>
            <person name="Read T.D."/>
            <person name="Nelson K.E."/>
            <person name="Nelson W.C."/>
            <person name="Ward N.L."/>
            <person name="Tettelin H."/>
            <person name="Davidsen T.M."/>
            <person name="Beanan M.J."/>
            <person name="DeBoy R.T."/>
            <person name="Daugherty S.C."/>
            <person name="Brinkac L.M."/>
            <person name="Madupu R."/>
            <person name="Dodson R.J."/>
            <person name="Khouri H.M."/>
            <person name="Lee K.H."/>
            <person name="Carty H.A."/>
            <person name="Scanlan D."/>
            <person name="Heinzen R.A."/>
            <person name="Thompson H.A."/>
            <person name="Samuel J.E."/>
            <person name="Fraser C.M."/>
            <person name="Heidelberg J.F."/>
        </authorList>
    </citation>
    <scope>NUCLEOTIDE SEQUENCE [LARGE SCALE GENOMIC DNA]</scope>
    <source>
        <strain>RSA 493 / Nine Mile phase I</strain>
    </source>
</reference>
<reference key="2">
    <citation type="journal article" date="2007" name="Infect. Immun.">
        <title>Proteome and antigen profiling of Coxiella burnetii developmental forms.</title>
        <authorList>
            <person name="Coleman S.A."/>
            <person name="Fischer E.R."/>
            <person name="Cockrell D.C."/>
            <person name="Voth D.E."/>
            <person name="Howe D."/>
            <person name="Mead D.J."/>
            <person name="Samuel J.E."/>
            <person name="Heinzen R.A."/>
        </authorList>
    </citation>
    <scope>IDENTIFICATION BY MASS SPECTROMETRY</scope>
    <scope>DEVELOPMENTAL STAGE</scope>
    <source>
        <strain>Nine Mile Crazy / RSA 514</strain>
    </source>
</reference>
<dbReference type="EMBL" id="AE016828">
    <property type="protein sequence ID" value="AAO89656.2"/>
    <property type="status" value="ALT_INIT"/>
    <property type="molecule type" value="Genomic_DNA"/>
</dbReference>
<dbReference type="RefSeq" id="NP_819142.2">
    <property type="nucleotide sequence ID" value="NC_002971.3"/>
</dbReference>
<dbReference type="SMR" id="Q83F59"/>
<dbReference type="STRING" id="227377.CBU_0090"/>
<dbReference type="EnsemblBacteria" id="AAO89656">
    <property type="protein sequence ID" value="AAO89656"/>
    <property type="gene ID" value="CBU_0090"/>
</dbReference>
<dbReference type="GeneID" id="1207960"/>
<dbReference type="KEGG" id="cbu:CBU_0090"/>
<dbReference type="PATRIC" id="fig|227377.7.peg.91"/>
<dbReference type="eggNOG" id="COG0823">
    <property type="taxonomic scope" value="Bacteria"/>
</dbReference>
<dbReference type="HOGENOM" id="CLU_047123_0_0_6"/>
<dbReference type="OrthoDB" id="9802240at2"/>
<dbReference type="Proteomes" id="UP000002671">
    <property type="component" value="Chromosome"/>
</dbReference>
<dbReference type="GO" id="GO:0042597">
    <property type="term" value="C:periplasmic space"/>
    <property type="evidence" value="ECO:0007669"/>
    <property type="project" value="UniProtKB-SubCell"/>
</dbReference>
<dbReference type="GO" id="GO:0051301">
    <property type="term" value="P:cell division"/>
    <property type="evidence" value="ECO:0007669"/>
    <property type="project" value="UniProtKB-UniRule"/>
</dbReference>
<dbReference type="GO" id="GO:0017038">
    <property type="term" value="P:protein import"/>
    <property type="evidence" value="ECO:0007669"/>
    <property type="project" value="InterPro"/>
</dbReference>
<dbReference type="Gene3D" id="2.120.10.30">
    <property type="entry name" value="TolB, C-terminal domain"/>
    <property type="match status" value="1"/>
</dbReference>
<dbReference type="Gene3D" id="3.40.50.10070">
    <property type="entry name" value="TolB, N-terminal domain"/>
    <property type="match status" value="1"/>
</dbReference>
<dbReference type="HAMAP" id="MF_00671">
    <property type="entry name" value="TolB"/>
    <property type="match status" value="1"/>
</dbReference>
<dbReference type="InterPro" id="IPR011042">
    <property type="entry name" value="6-blade_b-propeller_TolB-like"/>
</dbReference>
<dbReference type="InterPro" id="IPR011659">
    <property type="entry name" value="PD40"/>
</dbReference>
<dbReference type="InterPro" id="IPR014167">
    <property type="entry name" value="Tol-Pal_TolB"/>
</dbReference>
<dbReference type="InterPro" id="IPR007195">
    <property type="entry name" value="TolB_N"/>
</dbReference>
<dbReference type="NCBIfam" id="TIGR02800">
    <property type="entry name" value="propeller_TolB"/>
    <property type="match status" value="1"/>
</dbReference>
<dbReference type="PANTHER" id="PTHR36842:SF1">
    <property type="entry name" value="PROTEIN TOLB"/>
    <property type="match status" value="1"/>
</dbReference>
<dbReference type="PANTHER" id="PTHR36842">
    <property type="entry name" value="PROTEIN TOLB HOMOLOG"/>
    <property type="match status" value="1"/>
</dbReference>
<dbReference type="Pfam" id="PF07676">
    <property type="entry name" value="PD40"/>
    <property type="match status" value="5"/>
</dbReference>
<dbReference type="Pfam" id="PF04052">
    <property type="entry name" value="TolB_N"/>
    <property type="match status" value="1"/>
</dbReference>
<dbReference type="SUPFAM" id="SSF52964">
    <property type="entry name" value="TolB, N-terminal domain"/>
    <property type="match status" value="1"/>
</dbReference>
<dbReference type="SUPFAM" id="SSF69304">
    <property type="entry name" value="Tricorn protease N-terminal domain"/>
    <property type="match status" value="1"/>
</dbReference>
<comment type="function">
    <text evidence="1">Part of the Tol-Pal system, which plays a role in outer membrane invagination during cell division and is important for maintaining outer membrane integrity.</text>
</comment>
<comment type="subunit">
    <text evidence="1">The Tol-Pal system is composed of five core proteins: the inner membrane proteins TolA, TolQ and TolR, the periplasmic protein TolB and the outer membrane protein Pal. They form a network linking the inner and outer membranes and the peptidoglycan layer.</text>
</comment>
<comment type="subcellular location">
    <subcellularLocation>
        <location evidence="1">Periplasm</location>
    </subcellularLocation>
</comment>
<comment type="developmental stage">
    <text evidence="2">More than twofold more abundant in the small cell variant (SCV) stage than in the large cell variant (LCV) stage (at protein level). LCVs are more metabolically active than SCVs.</text>
</comment>
<comment type="similarity">
    <text evidence="1">Belongs to the TolB family.</text>
</comment>
<comment type="sequence caution" evidence="3">
    <conflict type="erroneous initiation">
        <sequence resource="EMBL-CDS" id="AAO89656"/>
    </conflict>
</comment>
<gene>
    <name evidence="1" type="primary">tolB</name>
    <name type="ordered locus">CBU_0090</name>
</gene>
<protein>
    <recommendedName>
        <fullName evidence="1">Tol-Pal system protein TolB</fullName>
    </recommendedName>
</protein>
<feature type="signal peptide" evidence="1">
    <location>
        <begin position="1"/>
        <end position="23"/>
    </location>
</feature>
<feature type="chain" id="PRO_0000034644" description="Tol-Pal system protein TolB" evidence="1">
    <location>
        <begin position="24"/>
        <end position="437"/>
    </location>
</feature>
<organism>
    <name type="scientific">Coxiella burnetii (strain RSA 493 / Nine Mile phase I)</name>
    <dbReference type="NCBI Taxonomy" id="227377"/>
    <lineage>
        <taxon>Bacteria</taxon>
        <taxon>Pseudomonadati</taxon>
        <taxon>Pseudomonadota</taxon>
        <taxon>Gammaproteobacteria</taxon>
        <taxon>Legionellales</taxon>
        <taxon>Coxiellaceae</taxon>
        <taxon>Coxiella</taxon>
    </lineage>
</organism>
<name>TOLB_COXBU</name>